<dbReference type="EC" id="2.7.1.130" evidence="1"/>
<dbReference type="EMBL" id="CP000305">
    <property type="protein sequence ID" value="ABG18909.1"/>
    <property type="molecule type" value="Genomic_DNA"/>
</dbReference>
<dbReference type="EMBL" id="ACNQ01000017">
    <property type="protein sequence ID" value="EEO75023.1"/>
    <property type="molecule type" value="Genomic_DNA"/>
</dbReference>
<dbReference type="RefSeq" id="WP_002211319.1">
    <property type="nucleotide sequence ID" value="NZ_ACNQ01000017.1"/>
</dbReference>
<dbReference type="SMR" id="Q1CGH1"/>
<dbReference type="GeneID" id="57977192"/>
<dbReference type="KEGG" id="ypn:YPN_2581"/>
<dbReference type="HOGENOM" id="CLU_038816_2_0_6"/>
<dbReference type="UniPathway" id="UPA00359">
    <property type="reaction ID" value="UER00482"/>
</dbReference>
<dbReference type="Proteomes" id="UP000008936">
    <property type="component" value="Chromosome"/>
</dbReference>
<dbReference type="GO" id="GO:0005886">
    <property type="term" value="C:plasma membrane"/>
    <property type="evidence" value="ECO:0007669"/>
    <property type="project" value="TreeGrafter"/>
</dbReference>
<dbReference type="GO" id="GO:0005524">
    <property type="term" value="F:ATP binding"/>
    <property type="evidence" value="ECO:0007669"/>
    <property type="project" value="UniProtKB-UniRule"/>
</dbReference>
<dbReference type="GO" id="GO:0009029">
    <property type="term" value="F:tetraacyldisaccharide 4'-kinase activity"/>
    <property type="evidence" value="ECO:0007669"/>
    <property type="project" value="UniProtKB-UniRule"/>
</dbReference>
<dbReference type="GO" id="GO:0009245">
    <property type="term" value="P:lipid A biosynthetic process"/>
    <property type="evidence" value="ECO:0007669"/>
    <property type="project" value="UniProtKB-UniRule"/>
</dbReference>
<dbReference type="GO" id="GO:0009244">
    <property type="term" value="P:lipopolysaccharide core region biosynthetic process"/>
    <property type="evidence" value="ECO:0007669"/>
    <property type="project" value="TreeGrafter"/>
</dbReference>
<dbReference type="Gene3D" id="3.40.50.300">
    <property type="entry name" value="P-loop containing nucleotide triphosphate hydrolases"/>
    <property type="match status" value="1"/>
</dbReference>
<dbReference type="HAMAP" id="MF_00409">
    <property type="entry name" value="LpxK"/>
    <property type="match status" value="1"/>
</dbReference>
<dbReference type="InterPro" id="IPR003758">
    <property type="entry name" value="LpxK"/>
</dbReference>
<dbReference type="InterPro" id="IPR027417">
    <property type="entry name" value="P-loop_NTPase"/>
</dbReference>
<dbReference type="NCBIfam" id="TIGR00682">
    <property type="entry name" value="lpxK"/>
    <property type="match status" value="1"/>
</dbReference>
<dbReference type="PANTHER" id="PTHR42724">
    <property type="entry name" value="TETRAACYLDISACCHARIDE 4'-KINASE"/>
    <property type="match status" value="1"/>
</dbReference>
<dbReference type="PANTHER" id="PTHR42724:SF1">
    <property type="entry name" value="TETRAACYLDISACCHARIDE 4'-KINASE, MITOCHONDRIAL-RELATED"/>
    <property type="match status" value="1"/>
</dbReference>
<dbReference type="Pfam" id="PF02606">
    <property type="entry name" value="LpxK"/>
    <property type="match status" value="1"/>
</dbReference>
<dbReference type="SUPFAM" id="SSF52540">
    <property type="entry name" value="P-loop containing nucleoside triphosphate hydrolases"/>
    <property type="match status" value="1"/>
</dbReference>
<keyword id="KW-0067">ATP-binding</keyword>
<keyword id="KW-0418">Kinase</keyword>
<keyword id="KW-0441">Lipid A biosynthesis</keyword>
<keyword id="KW-0444">Lipid biosynthesis</keyword>
<keyword id="KW-0443">Lipid metabolism</keyword>
<keyword id="KW-0547">Nucleotide-binding</keyword>
<keyword id="KW-0808">Transferase</keyword>
<protein>
    <recommendedName>
        <fullName evidence="1">Tetraacyldisaccharide 4'-kinase</fullName>
        <ecNumber evidence="1">2.7.1.130</ecNumber>
    </recommendedName>
    <alternativeName>
        <fullName evidence="1">Lipid A 4'-kinase</fullName>
    </alternativeName>
</protein>
<gene>
    <name evidence="1" type="primary">lpxK</name>
    <name type="ordered locus">YPN_2581</name>
    <name type="ORF">YP516_2908</name>
</gene>
<name>LPXK_YERPN</name>
<evidence type="ECO:0000255" key="1">
    <source>
        <dbReference type="HAMAP-Rule" id="MF_00409"/>
    </source>
</evidence>
<accession>Q1CGH1</accession>
<accession>C4GVS3</accession>
<proteinExistence type="inferred from homology"/>
<comment type="function">
    <text evidence="1">Transfers the gamma-phosphate of ATP to the 4'-position of a tetraacyldisaccharide 1-phosphate intermediate (termed DS-1-P) to form tetraacyldisaccharide 1,4'-bis-phosphate (lipid IVA).</text>
</comment>
<comment type="catalytic activity">
    <reaction evidence="1">
        <text>a lipid A disaccharide + ATP = a lipid IVA + ADP + H(+)</text>
        <dbReference type="Rhea" id="RHEA:67840"/>
        <dbReference type="ChEBI" id="CHEBI:15378"/>
        <dbReference type="ChEBI" id="CHEBI:30616"/>
        <dbReference type="ChEBI" id="CHEBI:176343"/>
        <dbReference type="ChEBI" id="CHEBI:176425"/>
        <dbReference type="ChEBI" id="CHEBI:456216"/>
        <dbReference type="EC" id="2.7.1.130"/>
    </reaction>
</comment>
<comment type="pathway">
    <text evidence="1">Glycolipid biosynthesis; lipid IV(A) biosynthesis; lipid IV(A) from (3R)-3-hydroxytetradecanoyl-[acyl-carrier-protein] and UDP-N-acetyl-alpha-D-glucosamine: step 6/6.</text>
</comment>
<comment type="similarity">
    <text evidence="1">Belongs to the LpxK family.</text>
</comment>
<feature type="chain" id="PRO_0000291256" description="Tetraacyldisaccharide 4'-kinase">
    <location>
        <begin position="1"/>
        <end position="328"/>
    </location>
</feature>
<feature type="binding site" evidence="1">
    <location>
        <begin position="55"/>
        <end position="62"/>
    </location>
    <ligand>
        <name>ATP</name>
        <dbReference type="ChEBI" id="CHEBI:30616"/>
    </ligand>
</feature>
<reference key="1">
    <citation type="journal article" date="2006" name="J. Bacteriol.">
        <title>Complete genome sequence of Yersinia pestis strains Antiqua and Nepal516: evidence of gene reduction in an emerging pathogen.</title>
        <authorList>
            <person name="Chain P.S.G."/>
            <person name="Hu P."/>
            <person name="Malfatti S.A."/>
            <person name="Radnedge L."/>
            <person name="Larimer F."/>
            <person name="Vergez L.M."/>
            <person name="Worsham P."/>
            <person name="Chu M.C."/>
            <person name="Andersen G.L."/>
        </authorList>
    </citation>
    <scope>NUCLEOTIDE SEQUENCE [LARGE SCALE GENOMIC DNA]</scope>
    <source>
        <strain>Nepal516</strain>
    </source>
</reference>
<reference key="2">
    <citation type="submission" date="2009-04" db="EMBL/GenBank/DDBJ databases">
        <title>Yersinia pestis Nepal516A whole genome shotgun sequencing project.</title>
        <authorList>
            <person name="Plunkett G. III"/>
            <person name="Anderson B.D."/>
            <person name="Baumler D.J."/>
            <person name="Burland V."/>
            <person name="Cabot E.L."/>
            <person name="Glasner J.D."/>
            <person name="Mau B."/>
            <person name="Neeno-Eckwall E."/>
            <person name="Perna N.T."/>
            <person name="Munk A.C."/>
            <person name="Tapia R."/>
            <person name="Green L.D."/>
            <person name="Rogers Y.C."/>
            <person name="Detter J.C."/>
            <person name="Bruce D.C."/>
            <person name="Brettin T.S."/>
        </authorList>
    </citation>
    <scope>NUCLEOTIDE SEQUENCE [LARGE SCALE GENOMIC DNA]</scope>
    <source>
        <strain>Nepal516</strain>
    </source>
</reference>
<sequence>MIERIWSGQSRLYLLLLPLSWLYGAVTWLIRASYRLGLRSAWRSPVPVIIVGNLTAGGNGKTPVVIWLVEQLQQRGYRVGVVSRGYGGKSAVYPLLLSDNTTTAQAGDEPVLIFQRTGAPVAVSPKRADAIKALLQSHAVDFIITDDGLQHYALQRDFELVVIDGVRRFGNGWWLPAGPMREREGRLRSVDAAITNGGLAAEGEIPMQLVAREAVNLVTGQRQPAEQLQHVVAMAGIGHPPRFFATLNLLGIKPENEHAFADHQDYSLAQLSRLTSGPQILLMTEKDAVKCRAFALPNWWYLPVDAQLPSDRADKLLLNIQALSPDTK</sequence>
<organism>
    <name type="scientific">Yersinia pestis bv. Antiqua (strain Nepal516)</name>
    <dbReference type="NCBI Taxonomy" id="377628"/>
    <lineage>
        <taxon>Bacteria</taxon>
        <taxon>Pseudomonadati</taxon>
        <taxon>Pseudomonadota</taxon>
        <taxon>Gammaproteobacteria</taxon>
        <taxon>Enterobacterales</taxon>
        <taxon>Yersiniaceae</taxon>
        <taxon>Yersinia</taxon>
    </lineage>
</organism>